<protein>
    <recommendedName>
        <fullName evidence="1">tRNA uridine(34) hydroxylase</fullName>
        <ecNumber evidence="1">1.14.-.-</ecNumber>
    </recommendedName>
    <alternativeName>
        <fullName evidence="1">tRNA hydroxylation protein O</fullName>
    </alternativeName>
</protein>
<comment type="function">
    <text evidence="1">Catalyzes oxygen-dependent 5-hydroxyuridine (ho5U) modification at position 34 in tRNAs.</text>
</comment>
<comment type="catalytic activity">
    <reaction evidence="1">
        <text>uridine(34) in tRNA + AH2 + O2 = 5-hydroxyuridine(34) in tRNA + A + H2O</text>
        <dbReference type="Rhea" id="RHEA:64224"/>
        <dbReference type="Rhea" id="RHEA-COMP:11727"/>
        <dbReference type="Rhea" id="RHEA-COMP:13381"/>
        <dbReference type="ChEBI" id="CHEBI:13193"/>
        <dbReference type="ChEBI" id="CHEBI:15377"/>
        <dbReference type="ChEBI" id="CHEBI:15379"/>
        <dbReference type="ChEBI" id="CHEBI:17499"/>
        <dbReference type="ChEBI" id="CHEBI:65315"/>
        <dbReference type="ChEBI" id="CHEBI:136877"/>
    </reaction>
</comment>
<comment type="similarity">
    <text evidence="1">Belongs to the TrhO family.</text>
</comment>
<feature type="chain" id="PRO_1000081194" description="tRNA uridine(34) hydroxylase">
    <location>
        <begin position="1"/>
        <end position="350"/>
    </location>
</feature>
<feature type="domain" description="Rhodanese" evidence="1">
    <location>
        <begin position="146"/>
        <end position="240"/>
    </location>
</feature>
<feature type="region of interest" description="Disordered" evidence="2">
    <location>
        <begin position="318"/>
        <end position="350"/>
    </location>
</feature>
<feature type="active site" description="Cysteine persulfide intermediate" evidence="1">
    <location>
        <position position="200"/>
    </location>
</feature>
<evidence type="ECO:0000255" key="1">
    <source>
        <dbReference type="HAMAP-Rule" id="MF_00469"/>
    </source>
</evidence>
<evidence type="ECO:0000256" key="2">
    <source>
        <dbReference type="SAM" id="MobiDB-lite"/>
    </source>
</evidence>
<name>TRHO_SALAR</name>
<gene>
    <name evidence="1" type="primary">trhO</name>
    <name type="synonym">yceA</name>
    <name type="ordered locus">SARI_01842</name>
</gene>
<keyword id="KW-0560">Oxidoreductase</keyword>
<keyword id="KW-1185">Reference proteome</keyword>
<keyword id="KW-0819">tRNA processing</keyword>
<dbReference type="EC" id="1.14.-.-" evidence="1"/>
<dbReference type="EMBL" id="CP000880">
    <property type="protein sequence ID" value="ABX21727.1"/>
    <property type="molecule type" value="Genomic_DNA"/>
</dbReference>
<dbReference type="SMR" id="A9MH08"/>
<dbReference type="STRING" id="41514.SARI_01842"/>
<dbReference type="KEGG" id="ses:SARI_01842"/>
<dbReference type="HOGENOM" id="CLU_038878_1_1_6"/>
<dbReference type="Proteomes" id="UP000002084">
    <property type="component" value="Chromosome"/>
</dbReference>
<dbReference type="GO" id="GO:0016705">
    <property type="term" value="F:oxidoreductase activity, acting on paired donors, with incorporation or reduction of molecular oxygen"/>
    <property type="evidence" value="ECO:0007669"/>
    <property type="project" value="UniProtKB-UniRule"/>
</dbReference>
<dbReference type="GO" id="GO:0006400">
    <property type="term" value="P:tRNA modification"/>
    <property type="evidence" value="ECO:0007669"/>
    <property type="project" value="UniProtKB-UniRule"/>
</dbReference>
<dbReference type="CDD" id="cd01518">
    <property type="entry name" value="RHOD_YceA"/>
    <property type="match status" value="1"/>
</dbReference>
<dbReference type="Gene3D" id="3.30.70.100">
    <property type="match status" value="1"/>
</dbReference>
<dbReference type="Gene3D" id="3.40.250.10">
    <property type="entry name" value="Rhodanese-like domain"/>
    <property type="match status" value="1"/>
</dbReference>
<dbReference type="HAMAP" id="MF_00469">
    <property type="entry name" value="TrhO"/>
    <property type="match status" value="1"/>
</dbReference>
<dbReference type="InterPro" id="IPR001763">
    <property type="entry name" value="Rhodanese-like_dom"/>
</dbReference>
<dbReference type="InterPro" id="IPR036873">
    <property type="entry name" value="Rhodanese-like_dom_sf"/>
</dbReference>
<dbReference type="InterPro" id="IPR022111">
    <property type="entry name" value="Rhodanese_C"/>
</dbReference>
<dbReference type="InterPro" id="IPR020936">
    <property type="entry name" value="TrhO"/>
</dbReference>
<dbReference type="InterPro" id="IPR040503">
    <property type="entry name" value="TRHO_N"/>
</dbReference>
<dbReference type="NCBIfam" id="NF001133">
    <property type="entry name" value="PRK00142.1-1"/>
    <property type="match status" value="1"/>
</dbReference>
<dbReference type="PANTHER" id="PTHR43846:SF1">
    <property type="entry name" value="TRNA URIDINE(34) HYDROXYLASE"/>
    <property type="match status" value="1"/>
</dbReference>
<dbReference type="PANTHER" id="PTHR43846">
    <property type="entry name" value="UPF0176 PROTEIN YCEA"/>
    <property type="match status" value="1"/>
</dbReference>
<dbReference type="Pfam" id="PF00581">
    <property type="entry name" value="Rhodanese"/>
    <property type="match status" value="1"/>
</dbReference>
<dbReference type="Pfam" id="PF12368">
    <property type="entry name" value="Rhodanese_C"/>
    <property type="match status" value="1"/>
</dbReference>
<dbReference type="Pfam" id="PF17773">
    <property type="entry name" value="UPF0176_N"/>
    <property type="match status" value="1"/>
</dbReference>
<dbReference type="SMART" id="SM00450">
    <property type="entry name" value="RHOD"/>
    <property type="match status" value="1"/>
</dbReference>
<dbReference type="SUPFAM" id="SSF52821">
    <property type="entry name" value="Rhodanese/Cell cycle control phosphatase"/>
    <property type="match status" value="1"/>
</dbReference>
<dbReference type="PROSITE" id="PS50206">
    <property type="entry name" value="RHODANESE_3"/>
    <property type="match status" value="1"/>
</dbReference>
<reference key="1">
    <citation type="submission" date="2007-11" db="EMBL/GenBank/DDBJ databases">
        <authorList>
            <consortium name="The Salmonella enterica serovar Arizonae Genome Sequencing Project"/>
            <person name="McClelland M."/>
            <person name="Sanderson E.K."/>
            <person name="Porwollik S."/>
            <person name="Spieth J."/>
            <person name="Clifton W.S."/>
            <person name="Fulton R."/>
            <person name="Chunyan W."/>
            <person name="Wollam A."/>
            <person name="Shah N."/>
            <person name="Pepin K."/>
            <person name="Bhonagiri V."/>
            <person name="Nash W."/>
            <person name="Johnson M."/>
            <person name="Thiruvilangam P."/>
            <person name="Wilson R."/>
        </authorList>
    </citation>
    <scope>NUCLEOTIDE SEQUENCE [LARGE SCALE GENOMIC DNA]</scope>
    <source>
        <strain>ATCC BAA-731 / CDC346-86 / RSK2980</strain>
    </source>
</reference>
<accession>A9MH08</accession>
<proteinExistence type="inferred from homology"/>
<sequence length="350" mass="39862">MPVLHNRISNDELKARMLAESEPRTTISFYKYFTIVSPQQTRDALYQMFTALGIFGRVYLAHEGINAQISVPQSKVETFRQQLYAFDPALDGLRLNIALEDDGKSFWVLRMKVRDRIVADGIDDPSFDASNVGAYLKAAEVNAMLDDPDAIFIDMRNHYEYEVGHFENALEIPADTFREQLPKAVEMLREHADKKIVMYCTGGIRCEKASAWMKHNGFNKVWHIEGGIIEYARRAREQGLPVRFIGKNFVFDERMGERISDEVIAHCHQCGALCDSHTNCKNAGCHLLFIQCPLCASKFNGCCSEQCCEELALPEDEQRRRRAGREKGNKIFNKSRGRLNSKLGIPDPTE</sequence>
<organism>
    <name type="scientific">Salmonella arizonae (strain ATCC BAA-731 / CDC346-86 / RSK2980)</name>
    <dbReference type="NCBI Taxonomy" id="41514"/>
    <lineage>
        <taxon>Bacteria</taxon>
        <taxon>Pseudomonadati</taxon>
        <taxon>Pseudomonadota</taxon>
        <taxon>Gammaproteobacteria</taxon>
        <taxon>Enterobacterales</taxon>
        <taxon>Enterobacteriaceae</taxon>
        <taxon>Salmonella</taxon>
    </lineage>
</organism>